<accession>B2SD40</accession>
<gene>
    <name evidence="1" type="primary">msrQ</name>
    <name type="ordered locus">BAbS19_II02310</name>
</gene>
<name>MSRQ_BRUA1</name>
<comment type="function">
    <text evidence="1">Part of the MsrPQ system that repairs oxidized periplasmic proteins containing methionine sulfoxide residues (Met-O), using respiratory chain electrons. Thus protects these proteins from oxidative-stress damage caused by reactive species of oxygen and chlorine generated by the host defense mechanisms. MsrPQ is essential for the maintenance of envelope integrity under bleach stress, rescuing a wide series of structurally unrelated periplasmic proteins from methionine oxidation. MsrQ provides electrons for reduction to the reductase catalytic subunit MsrP, using the quinone pool of the respiratory chain.</text>
</comment>
<comment type="cofactor">
    <cofactor evidence="1">
        <name>FMN</name>
        <dbReference type="ChEBI" id="CHEBI:58210"/>
    </cofactor>
    <text evidence="1">Binds 1 FMN per subunit.</text>
</comment>
<comment type="cofactor">
    <cofactor evidence="1">
        <name>heme b</name>
        <dbReference type="ChEBI" id="CHEBI:60344"/>
    </cofactor>
    <text evidence="1">Binds 1 heme b (iron(II)-protoporphyrin IX) group per subunit.</text>
</comment>
<comment type="subunit">
    <text evidence="1">Heterodimer of a catalytic subunit (MsrP) and a heme-binding subunit (MsrQ).</text>
</comment>
<comment type="subcellular location">
    <subcellularLocation>
        <location evidence="1">Cell inner membrane</location>
        <topology evidence="1">Multi-pass membrane protein</topology>
    </subcellularLocation>
</comment>
<comment type="similarity">
    <text evidence="1">Belongs to the MsrQ family.</text>
</comment>
<reference key="1">
    <citation type="journal article" date="2008" name="PLoS ONE">
        <title>Genome sequence of Brucella abortus vaccine strain S19 compared to virulent strains yields candidate virulence genes.</title>
        <authorList>
            <person name="Crasta O.R."/>
            <person name="Folkerts O."/>
            <person name="Fei Z."/>
            <person name="Mane S.P."/>
            <person name="Evans C."/>
            <person name="Martino-Catt S."/>
            <person name="Bricker B."/>
            <person name="Yu G."/>
            <person name="Du L."/>
            <person name="Sobral B.W."/>
        </authorList>
    </citation>
    <scope>NUCLEOTIDE SEQUENCE [LARGE SCALE GENOMIC DNA]</scope>
    <source>
        <strain>S19</strain>
    </source>
</reference>
<organism>
    <name type="scientific">Brucella abortus (strain S19)</name>
    <dbReference type="NCBI Taxonomy" id="430066"/>
    <lineage>
        <taxon>Bacteria</taxon>
        <taxon>Pseudomonadati</taxon>
        <taxon>Pseudomonadota</taxon>
        <taxon>Alphaproteobacteria</taxon>
        <taxon>Hyphomicrobiales</taxon>
        <taxon>Brucellaceae</taxon>
        <taxon>Brucella/Ochrobactrum group</taxon>
        <taxon>Brucella</taxon>
    </lineage>
</organism>
<evidence type="ECO:0000255" key="1">
    <source>
        <dbReference type="HAMAP-Rule" id="MF_01207"/>
    </source>
</evidence>
<feature type="chain" id="PRO_1000138727" description="Protein-methionine-sulfoxide reductase heme-binding subunit MsrQ">
    <location>
        <begin position="1"/>
        <end position="220"/>
    </location>
</feature>
<feature type="transmembrane region" description="Helical" evidence="1">
    <location>
        <begin position="20"/>
        <end position="40"/>
    </location>
</feature>
<feature type="transmembrane region" description="Helical" evidence="1">
    <location>
        <begin position="52"/>
        <end position="72"/>
    </location>
</feature>
<feature type="transmembrane region" description="Helical" evidence="1">
    <location>
        <begin position="86"/>
        <end position="106"/>
    </location>
</feature>
<feature type="transmembrane region" description="Helical" evidence="1">
    <location>
        <begin position="122"/>
        <end position="142"/>
    </location>
</feature>
<feature type="transmembrane region" description="Helical" evidence="1">
    <location>
        <begin position="153"/>
        <end position="173"/>
    </location>
</feature>
<feature type="transmembrane region" description="Helical" evidence="1">
    <location>
        <begin position="175"/>
        <end position="195"/>
    </location>
</feature>
<protein>
    <recommendedName>
        <fullName evidence="1">Protein-methionine-sulfoxide reductase heme-binding subunit MsrQ</fullName>
    </recommendedName>
    <alternativeName>
        <fullName evidence="1">Flavocytochrome MsrQ</fullName>
    </alternativeName>
</protein>
<dbReference type="EMBL" id="CP000888">
    <property type="protein sequence ID" value="ACD73744.1"/>
    <property type="molecule type" value="Genomic_DNA"/>
</dbReference>
<dbReference type="RefSeq" id="WP_002965660.1">
    <property type="nucleotide sequence ID" value="NC_010740.1"/>
</dbReference>
<dbReference type="SMR" id="B2SD40"/>
<dbReference type="GeneID" id="93015803"/>
<dbReference type="KEGG" id="bmc:BAbS19_II02310"/>
<dbReference type="HOGENOM" id="CLU_080662_2_0_5"/>
<dbReference type="Proteomes" id="UP000002565">
    <property type="component" value="Chromosome 2"/>
</dbReference>
<dbReference type="GO" id="GO:0005886">
    <property type="term" value="C:plasma membrane"/>
    <property type="evidence" value="ECO:0007669"/>
    <property type="project" value="UniProtKB-SubCell"/>
</dbReference>
<dbReference type="GO" id="GO:0009055">
    <property type="term" value="F:electron transfer activity"/>
    <property type="evidence" value="ECO:0007669"/>
    <property type="project" value="UniProtKB-UniRule"/>
</dbReference>
<dbReference type="GO" id="GO:0010181">
    <property type="term" value="F:FMN binding"/>
    <property type="evidence" value="ECO:0007669"/>
    <property type="project" value="UniProtKB-UniRule"/>
</dbReference>
<dbReference type="GO" id="GO:0020037">
    <property type="term" value="F:heme binding"/>
    <property type="evidence" value="ECO:0007669"/>
    <property type="project" value="UniProtKB-UniRule"/>
</dbReference>
<dbReference type="GO" id="GO:0046872">
    <property type="term" value="F:metal ion binding"/>
    <property type="evidence" value="ECO:0007669"/>
    <property type="project" value="UniProtKB-KW"/>
</dbReference>
<dbReference type="GO" id="GO:0016679">
    <property type="term" value="F:oxidoreductase activity, acting on diphenols and related substances as donors"/>
    <property type="evidence" value="ECO:0007669"/>
    <property type="project" value="TreeGrafter"/>
</dbReference>
<dbReference type="GO" id="GO:0030091">
    <property type="term" value="P:protein repair"/>
    <property type="evidence" value="ECO:0007669"/>
    <property type="project" value="UniProtKB-UniRule"/>
</dbReference>
<dbReference type="HAMAP" id="MF_01207">
    <property type="entry name" value="MsrQ"/>
    <property type="match status" value="1"/>
</dbReference>
<dbReference type="InterPro" id="IPR013130">
    <property type="entry name" value="Fe3_Rdtase_TM_dom"/>
</dbReference>
<dbReference type="InterPro" id="IPR022837">
    <property type="entry name" value="MsrQ-like"/>
</dbReference>
<dbReference type="NCBIfam" id="NF003833">
    <property type="entry name" value="PRK05419.1-5"/>
    <property type="match status" value="1"/>
</dbReference>
<dbReference type="PANTHER" id="PTHR36964">
    <property type="entry name" value="PROTEIN-METHIONINE-SULFOXIDE REDUCTASE HEME-BINDING SUBUNIT MSRQ"/>
    <property type="match status" value="1"/>
</dbReference>
<dbReference type="PANTHER" id="PTHR36964:SF1">
    <property type="entry name" value="PROTEIN-METHIONINE-SULFOXIDE REDUCTASE HEME-BINDING SUBUNIT MSRQ"/>
    <property type="match status" value="1"/>
</dbReference>
<dbReference type="Pfam" id="PF01794">
    <property type="entry name" value="Ferric_reduct"/>
    <property type="match status" value="1"/>
</dbReference>
<proteinExistence type="inferred from homology"/>
<sequence length="220" mass="24797">MAAATGTRKKKTPRPGQWKLWLLYTAGFVPAVWTFYLGATGQLGADPVKTFEHLLGLWALRFLILTLLVTPIRDLTGITLLRYRRALGLLAFYYALMHFTTYMVLDQGLNLSAIITDIVRRPFITIGMISLALLVPLALTSNNWSIRKLGRRWSSLHKLVYIAIAGSAVHFLMSVKSWPAEPVIYAAIVAALLLWRLARPYLRTRKPALRPRGEAIALRK</sequence>
<keyword id="KW-0997">Cell inner membrane</keyword>
<keyword id="KW-1003">Cell membrane</keyword>
<keyword id="KW-0249">Electron transport</keyword>
<keyword id="KW-0285">Flavoprotein</keyword>
<keyword id="KW-0288">FMN</keyword>
<keyword id="KW-0349">Heme</keyword>
<keyword id="KW-0408">Iron</keyword>
<keyword id="KW-0472">Membrane</keyword>
<keyword id="KW-0479">Metal-binding</keyword>
<keyword id="KW-0812">Transmembrane</keyword>
<keyword id="KW-1133">Transmembrane helix</keyword>
<keyword id="KW-0813">Transport</keyword>